<reference key="1">
    <citation type="submission" date="2005-09" db="EMBL/GenBank/DDBJ databases">
        <title>The chloroplast genome of mulberry: structural features and comparative analysis.</title>
        <authorList>
            <person name="Ravi V."/>
            <person name="Khurana J.P."/>
            <person name="Tyagi A.K."/>
            <person name="Khurana P."/>
        </authorList>
    </citation>
    <scope>NUCLEOTIDE SEQUENCE [LARGE SCALE GENOMIC DNA]</scope>
    <source>
        <strain>cv. K2</strain>
    </source>
</reference>
<protein>
    <recommendedName>
        <fullName evidence="1">Small ribosomal subunit protein uS19c</fullName>
    </recommendedName>
    <alternativeName>
        <fullName evidence="2">30S ribosomal protein S19, chloroplastic</fullName>
    </alternativeName>
</protein>
<gene>
    <name evidence="1" type="primary">rps19</name>
    <name type="ordered locus">MoinCp061</name>
</gene>
<feature type="chain" id="PRO_0000276913" description="Small ribosomal subunit protein uS19c">
    <location>
        <begin position="1"/>
        <end position="92"/>
    </location>
</feature>
<comment type="function">
    <text evidence="1">Protein S19 forms a complex with S13 that binds strongly to the 16S ribosomal RNA.</text>
</comment>
<comment type="subcellular location">
    <subcellularLocation>
        <location>Plastid</location>
        <location>Chloroplast</location>
    </subcellularLocation>
</comment>
<comment type="similarity">
    <text evidence="1">Belongs to the universal ribosomal protein uS19 family.</text>
</comment>
<proteinExistence type="inferred from homology"/>
<dbReference type="EMBL" id="DQ226511">
    <property type="protein sequence ID" value="ABB20997.1"/>
    <property type="molecule type" value="Genomic_DNA"/>
</dbReference>
<dbReference type="RefSeq" id="YP_762301.1">
    <property type="nucleotide sequence ID" value="NC_008359.1"/>
</dbReference>
<dbReference type="SMR" id="Q09WX7"/>
<dbReference type="GeneID" id="4290637"/>
<dbReference type="GO" id="GO:0009507">
    <property type="term" value="C:chloroplast"/>
    <property type="evidence" value="ECO:0007669"/>
    <property type="project" value="UniProtKB-SubCell"/>
</dbReference>
<dbReference type="GO" id="GO:0005763">
    <property type="term" value="C:mitochondrial small ribosomal subunit"/>
    <property type="evidence" value="ECO:0007669"/>
    <property type="project" value="TreeGrafter"/>
</dbReference>
<dbReference type="GO" id="GO:0019843">
    <property type="term" value="F:rRNA binding"/>
    <property type="evidence" value="ECO:0007669"/>
    <property type="project" value="UniProtKB-UniRule"/>
</dbReference>
<dbReference type="GO" id="GO:0003735">
    <property type="term" value="F:structural constituent of ribosome"/>
    <property type="evidence" value="ECO:0007669"/>
    <property type="project" value="InterPro"/>
</dbReference>
<dbReference type="GO" id="GO:0000028">
    <property type="term" value="P:ribosomal small subunit assembly"/>
    <property type="evidence" value="ECO:0007669"/>
    <property type="project" value="TreeGrafter"/>
</dbReference>
<dbReference type="GO" id="GO:0006412">
    <property type="term" value="P:translation"/>
    <property type="evidence" value="ECO:0007669"/>
    <property type="project" value="UniProtKB-UniRule"/>
</dbReference>
<dbReference type="FunFam" id="3.30.860.10:FF:000001">
    <property type="entry name" value="30S ribosomal protein S19"/>
    <property type="match status" value="1"/>
</dbReference>
<dbReference type="Gene3D" id="3.30.860.10">
    <property type="entry name" value="30s Ribosomal Protein S19, Chain A"/>
    <property type="match status" value="1"/>
</dbReference>
<dbReference type="HAMAP" id="MF_00531">
    <property type="entry name" value="Ribosomal_uS19"/>
    <property type="match status" value="1"/>
</dbReference>
<dbReference type="InterPro" id="IPR002222">
    <property type="entry name" value="Ribosomal_uS19"/>
</dbReference>
<dbReference type="InterPro" id="IPR005732">
    <property type="entry name" value="Ribosomal_uS19_bac-type"/>
</dbReference>
<dbReference type="InterPro" id="IPR020934">
    <property type="entry name" value="Ribosomal_uS19_CS"/>
</dbReference>
<dbReference type="InterPro" id="IPR023575">
    <property type="entry name" value="Ribosomal_uS19_SF"/>
</dbReference>
<dbReference type="NCBIfam" id="TIGR01050">
    <property type="entry name" value="rpsS_bact"/>
    <property type="match status" value="1"/>
</dbReference>
<dbReference type="PANTHER" id="PTHR11880">
    <property type="entry name" value="RIBOSOMAL PROTEIN S19P FAMILY MEMBER"/>
    <property type="match status" value="1"/>
</dbReference>
<dbReference type="PANTHER" id="PTHR11880:SF8">
    <property type="entry name" value="SMALL RIBOSOMAL SUBUNIT PROTEIN US19M"/>
    <property type="match status" value="1"/>
</dbReference>
<dbReference type="Pfam" id="PF00203">
    <property type="entry name" value="Ribosomal_S19"/>
    <property type="match status" value="1"/>
</dbReference>
<dbReference type="PIRSF" id="PIRSF002144">
    <property type="entry name" value="Ribosomal_S19"/>
    <property type="match status" value="1"/>
</dbReference>
<dbReference type="PRINTS" id="PR00975">
    <property type="entry name" value="RIBOSOMALS19"/>
</dbReference>
<dbReference type="SUPFAM" id="SSF54570">
    <property type="entry name" value="Ribosomal protein S19"/>
    <property type="match status" value="1"/>
</dbReference>
<dbReference type="PROSITE" id="PS00323">
    <property type="entry name" value="RIBOSOMAL_S19"/>
    <property type="match status" value="1"/>
</dbReference>
<name>RR19_MORIN</name>
<keyword id="KW-0150">Chloroplast</keyword>
<keyword id="KW-0934">Plastid</keyword>
<keyword id="KW-0687">Ribonucleoprotein</keyword>
<keyword id="KW-0689">Ribosomal protein</keyword>
<keyword id="KW-0694">RNA-binding</keyword>
<keyword id="KW-0699">rRNA-binding</keyword>
<evidence type="ECO:0000255" key="1">
    <source>
        <dbReference type="HAMAP-Rule" id="MF_00531"/>
    </source>
</evidence>
<evidence type="ECO:0000305" key="2"/>
<organism>
    <name type="scientific">Morus indica</name>
    <name type="common">Mulberry</name>
    <dbReference type="NCBI Taxonomy" id="248361"/>
    <lineage>
        <taxon>Eukaryota</taxon>
        <taxon>Viridiplantae</taxon>
        <taxon>Streptophyta</taxon>
        <taxon>Embryophyta</taxon>
        <taxon>Tracheophyta</taxon>
        <taxon>Spermatophyta</taxon>
        <taxon>Magnoliopsida</taxon>
        <taxon>eudicotyledons</taxon>
        <taxon>Gunneridae</taxon>
        <taxon>Pentapetalae</taxon>
        <taxon>rosids</taxon>
        <taxon>fabids</taxon>
        <taxon>Rosales</taxon>
        <taxon>Moraceae</taxon>
        <taxon>Moreae</taxon>
        <taxon>Morus</taxon>
    </lineage>
</organism>
<sequence>MARSLKKNPFVANHLLRKINMLNTKAEKEIIVTWSRASTIIPTMIGHTIAVHNGKEHLPIYITDRMVGHKLGEFAPTLNFRGHAKNDNRSRR</sequence>
<geneLocation type="chloroplast"/>
<accession>Q09WX7</accession>